<keyword id="KW-1185">Reference proteome</keyword>
<reference key="1">
    <citation type="journal article" date="1997" name="Nature">
        <title>The complete genome sequence of the Gram-positive bacterium Bacillus subtilis.</title>
        <authorList>
            <person name="Kunst F."/>
            <person name="Ogasawara N."/>
            <person name="Moszer I."/>
            <person name="Albertini A.M."/>
            <person name="Alloni G."/>
            <person name="Azevedo V."/>
            <person name="Bertero M.G."/>
            <person name="Bessieres P."/>
            <person name="Bolotin A."/>
            <person name="Borchert S."/>
            <person name="Borriss R."/>
            <person name="Boursier L."/>
            <person name="Brans A."/>
            <person name="Braun M."/>
            <person name="Brignell S.C."/>
            <person name="Bron S."/>
            <person name="Brouillet S."/>
            <person name="Bruschi C.V."/>
            <person name="Caldwell B."/>
            <person name="Capuano V."/>
            <person name="Carter N.M."/>
            <person name="Choi S.-K."/>
            <person name="Codani J.-J."/>
            <person name="Connerton I.F."/>
            <person name="Cummings N.J."/>
            <person name="Daniel R.A."/>
            <person name="Denizot F."/>
            <person name="Devine K.M."/>
            <person name="Duesterhoeft A."/>
            <person name="Ehrlich S.D."/>
            <person name="Emmerson P.T."/>
            <person name="Entian K.-D."/>
            <person name="Errington J."/>
            <person name="Fabret C."/>
            <person name="Ferrari E."/>
            <person name="Foulger D."/>
            <person name="Fritz C."/>
            <person name="Fujita M."/>
            <person name="Fujita Y."/>
            <person name="Fuma S."/>
            <person name="Galizzi A."/>
            <person name="Galleron N."/>
            <person name="Ghim S.-Y."/>
            <person name="Glaser P."/>
            <person name="Goffeau A."/>
            <person name="Golightly E.J."/>
            <person name="Grandi G."/>
            <person name="Guiseppi G."/>
            <person name="Guy B.J."/>
            <person name="Haga K."/>
            <person name="Haiech J."/>
            <person name="Harwood C.R."/>
            <person name="Henaut A."/>
            <person name="Hilbert H."/>
            <person name="Holsappel S."/>
            <person name="Hosono S."/>
            <person name="Hullo M.-F."/>
            <person name="Itaya M."/>
            <person name="Jones L.-M."/>
            <person name="Joris B."/>
            <person name="Karamata D."/>
            <person name="Kasahara Y."/>
            <person name="Klaerr-Blanchard M."/>
            <person name="Klein C."/>
            <person name="Kobayashi Y."/>
            <person name="Koetter P."/>
            <person name="Koningstein G."/>
            <person name="Krogh S."/>
            <person name="Kumano M."/>
            <person name="Kurita K."/>
            <person name="Lapidus A."/>
            <person name="Lardinois S."/>
            <person name="Lauber J."/>
            <person name="Lazarevic V."/>
            <person name="Lee S.-M."/>
            <person name="Levine A."/>
            <person name="Liu H."/>
            <person name="Masuda S."/>
            <person name="Mauel C."/>
            <person name="Medigue C."/>
            <person name="Medina N."/>
            <person name="Mellado R.P."/>
            <person name="Mizuno M."/>
            <person name="Moestl D."/>
            <person name="Nakai S."/>
            <person name="Noback M."/>
            <person name="Noone D."/>
            <person name="O'Reilly M."/>
            <person name="Ogawa K."/>
            <person name="Ogiwara A."/>
            <person name="Oudega B."/>
            <person name="Park S.-H."/>
            <person name="Parro V."/>
            <person name="Pohl T.M."/>
            <person name="Portetelle D."/>
            <person name="Porwollik S."/>
            <person name="Prescott A.M."/>
            <person name="Presecan E."/>
            <person name="Pujic P."/>
            <person name="Purnelle B."/>
            <person name="Rapoport G."/>
            <person name="Rey M."/>
            <person name="Reynolds S."/>
            <person name="Rieger M."/>
            <person name="Rivolta C."/>
            <person name="Rocha E."/>
            <person name="Roche B."/>
            <person name="Rose M."/>
            <person name="Sadaie Y."/>
            <person name="Sato T."/>
            <person name="Scanlan E."/>
            <person name="Schleich S."/>
            <person name="Schroeter R."/>
            <person name="Scoffone F."/>
            <person name="Sekiguchi J."/>
            <person name="Sekowska A."/>
            <person name="Seror S.J."/>
            <person name="Serror P."/>
            <person name="Shin B.-S."/>
            <person name="Soldo B."/>
            <person name="Sorokin A."/>
            <person name="Tacconi E."/>
            <person name="Takagi T."/>
            <person name="Takahashi H."/>
            <person name="Takemaru K."/>
            <person name="Takeuchi M."/>
            <person name="Tamakoshi A."/>
            <person name="Tanaka T."/>
            <person name="Terpstra P."/>
            <person name="Tognoni A."/>
            <person name="Tosato V."/>
            <person name="Uchiyama S."/>
            <person name="Vandenbol M."/>
            <person name="Vannier F."/>
            <person name="Vassarotti A."/>
            <person name="Viari A."/>
            <person name="Wambutt R."/>
            <person name="Wedler E."/>
            <person name="Wedler H."/>
            <person name="Weitzenegger T."/>
            <person name="Winters P."/>
            <person name="Wipat A."/>
            <person name="Yamamoto H."/>
            <person name="Yamane K."/>
            <person name="Yasumoto K."/>
            <person name="Yata K."/>
            <person name="Yoshida K."/>
            <person name="Yoshikawa H.-F."/>
            <person name="Zumstein E."/>
            <person name="Yoshikawa H."/>
            <person name="Danchin A."/>
        </authorList>
    </citation>
    <scope>NUCLEOTIDE SEQUENCE [LARGE SCALE GENOMIC DNA]</scope>
    <source>
        <strain>168</strain>
    </source>
</reference>
<feature type="chain" id="PRO_0000360532" description="Uncharacterized protein YezA">
    <location>
        <begin position="1"/>
        <end position="68"/>
    </location>
</feature>
<dbReference type="EMBL" id="AL009126">
    <property type="protein sequence ID" value="CAB12500.1"/>
    <property type="molecule type" value="Genomic_DNA"/>
</dbReference>
<dbReference type="PIR" id="F69799">
    <property type="entry name" value="F69799"/>
</dbReference>
<dbReference type="RefSeq" id="NP_388562.1">
    <property type="nucleotide sequence ID" value="NC_000964.3"/>
</dbReference>
<dbReference type="RefSeq" id="WP_003233877.1">
    <property type="nucleotide sequence ID" value="NZ_OZ025638.1"/>
</dbReference>
<dbReference type="SMR" id="O31505"/>
<dbReference type="FunCoup" id="O31505">
    <property type="interactions" value="46"/>
</dbReference>
<dbReference type="STRING" id="224308.BSU06800"/>
<dbReference type="PaxDb" id="224308-BSU06800"/>
<dbReference type="EnsemblBacteria" id="CAB12500">
    <property type="protein sequence ID" value="CAB12500"/>
    <property type="gene ID" value="BSU_06800"/>
</dbReference>
<dbReference type="GeneID" id="938751"/>
<dbReference type="KEGG" id="bsu:BSU06800"/>
<dbReference type="PATRIC" id="fig|224308.179.peg.738"/>
<dbReference type="eggNOG" id="ENOG5033AAN">
    <property type="taxonomic scope" value="Bacteria"/>
</dbReference>
<dbReference type="InParanoid" id="O31505"/>
<dbReference type="OrthoDB" id="6555806at2"/>
<dbReference type="BioCyc" id="BSUB:BSU06800-MONOMER"/>
<dbReference type="Proteomes" id="UP000001570">
    <property type="component" value="Chromosome"/>
</dbReference>
<dbReference type="Gene3D" id="1.10.1200.20">
    <property type="entry name" value="Colicin E immunity protein"/>
    <property type="match status" value="1"/>
</dbReference>
<dbReference type="InterPro" id="IPR035900">
    <property type="entry name" value="Colicin_E_sf"/>
</dbReference>
<dbReference type="SUPFAM" id="SSF47345">
    <property type="entry name" value="Colicin E immunity proteins"/>
    <property type="match status" value="1"/>
</dbReference>
<proteinExistence type="predicted"/>
<name>YEZA_BACSU</name>
<organism>
    <name type="scientific">Bacillus subtilis (strain 168)</name>
    <dbReference type="NCBI Taxonomy" id="224308"/>
    <lineage>
        <taxon>Bacteria</taxon>
        <taxon>Bacillati</taxon>
        <taxon>Bacillota</taxon>
        <taxon>Bacilli</taxon>
        <taxon>Bacillales</taxon>
        <taxon>Bacillaceae</taxon>
        <taxon>Bacillus</taxon>
    </lineage>
</organism>
<accession>O31505</accession>
<protein>
    <recommendedName>
        <fullName>Uncharacterized protein YezA</fullName>
    </recommendedName>
</protein>
<gene>
    <name type="primary">yezA</name>
    <name type="ordered locus">BSU06800</name>
</gene>
<sequence>MDKLTKEELIFLVKELMNPTLDDEKVSEYLDLLEKNVPYPAPSDLIFWSNEDYTAEQVVKIALNYKDE</sequence>